<accession>Q9H222</accession>
<accession>Q2T9G2</accession>
<accession>Q96QZ2</accession>
<accession>Q96QZ3</accession>
<sequence length="651" mass="72504">MGDLSSLTPGGSMGLQVNRGSQSSLEGAPATAPEPHSLGILHASYSVSHRVRPWWDITSCRQQWTRQILKDVSLYVESGQIMCILGSSGSGKTTLLDAMSGRLGRAGTFLGEVYVNGRALRREQFQDCFSYVLQSDTLLSSLTVRETLHYTALLAIRRGNPGSFQKKVEAVMAELSLSHVADRLIGNYSLGGISTGERRRVSIAAQLLQDPKVMLFDEPTTGLDCMTANQIVVLLVELARRNRIVVLTIHQPRSELFQLFDKIAILSFGELIFCGTPAEMLDFFNDCGYPCPEHSNPFDFYMDLTSVDTQSKEREIETSKRVQMIESAYKKSAICHKTLKNIERMKHLKTLPMVPFKTKDSPGVFSKLGVLLRRVTRNLVRNKLAVITRLLQNLIMGLFLLFFVLRVRSNVLKGAIQDRVGLLYQFVGATPYTGMLNAVNLFPVLRAVSDQESQDGLYQKWQMMLAYALHVLPFSVVATMIFSSVCYWTLGLHPEVARFGYFSAALLAPHLIGEFLTLVLLGIVQNPNIVNSVVALLSIAGVLVGSGFLRNIQEMPIPFKIISYFTFQKYCSEILVVNEFYGLNFTCGSSNVSVTTNPMCAFTQGIQFIEKTCPGATSRFTMNFLILYSFIPALVILGIVVFKIRDHLISR</sequence>
<gene>
    <name evidence="22" type="primary">ABCG5</name>
</gene>
<keyword id="KW-0002">3D-structure</keyword>
<keyword id="KW-0025">Alternative splicing</keyword>
<keyword id="KW-0067">ATP-binding</keyword>
<keyword id="KW-1003">Cell membrane</keyword>
<keyword id="KW-0225">Disease variant</keyword>
<keyword id="KW-0325">Glycoprotein</keyword>
<keyword id="KW-0445">Lipid transport</keyword>
<keyword id="KW-0460">Magnesium</keyword>
<keyword id="KW-0472">Membrane</keyword>
<keyword id="KW-0479">Metal-binding</keyword>
<keyword id="KW-0547">Nucleotide-binding</keyword>
<keyword id="KW-1267">Proteomics identification</keyword>
<keyword id="KW-1185">Reference proteome</keyword>
<keyword id="KW-1278">Translocase</keyword>
<keyword id="KW-0812">Transmembrane</keyword>
<keyword id="KW-1133">Transmembrane helix</keyword>
<keyword id="KW-0813">Transport</keyword>
<organism>
    <name type="scientific">Homo sapiens</name>
    <name type="common">Human</name>
    <dbReference type="NCBI Taxonomy" id="9606"/>
    <lineage>
        <taxon>Eukaryota</taxon>
        <taxon>Metazoa</taxon>
        <taxon>Chordata</taxon>
        <taxon>Craniata</taxon>
        <taxon>Vertebrata</taxon>
        <taxon>Euteleostomi</taxon>
        <taxon>Mammalia</taxon>
        <taxon>Eutheria</taxon>
        <taxon>Euarchontoglires</taxon>
        <taxon>Primates</taxon>
        <taxon>Haplorrhini</taxon>
        <taxon>Catarrhini</taxon>
        <taxon>Hominidae</taxon>
        <taxon>Homo</taxon>
    </lineage>
</organism>
<name>ABCG5_HUMAN</name>
<protein>
    <recommendedName>
        <fullName evidence="18">ATP-binding cassette sub-family G member 5</fullName>
        <ecNumber evidence="1">7.6.2.-</ecNumber>
    </recommendedName>
    <alternativeName>
        <fullName evidence="15">Sterolin-1</fullName>
    </alternativeName>
</protein>
<proteinExistence type="evidence at protein level"/>
<reference key="1">
    <citation type="journal article" date="2000" name="Science">
        <title>Accumulation of dietary cholesterol in sitosterolemia caused by mutations in adjacent ABC transporters.</title>
        <authorList>
            <person name="Berge K.E."/>
            <person name="Tian H."/>
            <person name="Graf G.A."/>
            <person name="Yu L."/>
            <person name="Grishin N.V."/>
            <person name="Schultz J."/>
            <person name="Kwiterovich P."/>
            <person name="Shan B."/>
            <person name="Barnes R."/>
            <person name="Hobbs H.H."/>
        </authorList>
    </citation>
    <scope>NUCLEOTIDE SEQUENCE [MRNA] (ISOFORM 1)</scope>
    <scope>VARIANT GLU-604</scope>
    <scope>FUNCTION</scope>
    <scope>TISSUE SPECIFICITY</scope>
    <source>
        <tissue>Liver</tissue>
    </source>
</reference>
<reference key="2">
    <citation type="journal article" date="2001" name="Nat. Genet.">
        <title>Identification of a gene, ABCG5, important in the regulation of dietary cholesterol absorption.</title>
        <authorList>
            <person name="Lee M.-H."/>
            <person name="Lu K."/>
            <person name="Hazard S."/>
            <person name="Yu H."/>
            <person name="Shulenin S."/>
            <person name="Hidaka H."/>
            <person name="Kojima H."/>
            <person name="Allikmets R."/>
            <person name="Sakuma N."/>
            <person name="Pegoraro R."/>
            <person name="Srivastava A.K."/>
            <person name="Salen G."/>
            <person name="Dean M."/>
            <person name="Patel S.B."/>
        </authorList>
    </citation>
    <scope>NUCLEOTIDE SEQUENCE [MRNA] (ISOFORM 1)</scope>
    <scope>VARIANTS STSL2 HIS-389; HIS-419 AND PRO-419</scope>
    <scope>VARIANT GLU-604</scope>
    <scope>FUNCTION</scope>
    <scope>TISSUE SPECIFICITY</scope>
    <source>
        <tissue>Liver</tissue>
    </source>
</reference>
<reference key="3">
    <citation type="journal article" date="2005" name="Nature">
        <title>Generation and annotation of the DNA sequences of human chromosomes 2 and 4.</title>
        <authorList>
            <person name="Hillier L.W."/>
            <person name="Graves T.A."/>
            <person name="Fulton R.S."/>
            <person name="Fulton L.A."/>
            <person name="Pepin K.H."/>
            <person name="Minx P."/>
            <person name="Wagner-McPherson C."/>
            <person name="Layman D."/>
            <person name="Wylie K."/>
            <person name="Sekhon M."/>
            <person name="Becker M.C."/>
            <person name="Fewell G.A."/>
            <person name="Delehaunty K.D."/>
            <person name="Miner T.L."/>
            <person name="Nash W.E."/>
            <person name="Kremitzki C."/>
            <person name="Oddy L."/>
            <person name="Du H."/>
            <person name="Sun H."/>
            <person name="Bradshaw-Cordum H."/>
            <person name="Ali J."/>
            <person name="Carter J."/>
            <person name="Cordes M."/>
            <person name="Harris A."/>
            <person name="Isak A."/>
            <person name="van Brunt A."/>
            <person name="Nguyen C."/>
            <person name="Du F."/>
            <person name="Courtney L."/>
            <person name="Kalicki J."/>
            <person name="Ozersky P."/>
            <person name="Abbott S."/>
            <person name="Armstrong J."/>
            <person name="Belter E.A."/>
            <person name="Caruso L."/>
            <person name="Cedroni M."/>
            <person name="Cotton M."/>
            <person name="Davidson T."/>
            <person name="Desai A."/>
            <person name="Elliott G."/>
            <person name="Erb T."/>
            <person name="Fronick C."/>
            <person name="Gaige T."/>
            <person name="Haakenson W."/>
            <person name="Haglund K."/>
            <person name="Holmes A."/>
            <person name="Harkins R."/>
            <person name="Kim K."/>
            <person name="Kruchowski S.S."/>
            <person name="Strong C.M."/>
            <person name="Grewal N."/>
            <person name="Goyea E."/>
            <person name="Hou S."/>
            <person name="Levy A."/>
            <person name="Martinka S."/>
            <person name="Mead K."/>
            <person name="McLellan M.D."/>
            <person name="Meyer R."/>
            <person name="Randall-Maher J."/>
            <person name="Tomlinson C."/>
            <person name="Dauphin-Kohlberg S."/>
            <person name="Kozlowicz-Reilly A."/>
            <person name="Shah N."/>
            <person name="Swearengen-Shahid S."/>
            <person name="Snider J."/>
            <person name="Strong J.T."/>
            <person name="Thompson J."/>
            <person name="Yoakum M."/>
            <person name="Leonard S."/>
            <person name="Pearman C."/>
            <person name="Trani L."/>
            <person name="Radionenko M."/>
            <person name="Waligorski J.E."/>
            <person name="Wang C."/>
            <person name="Rock S.M."/>
            <person name="Tin-Wollam A.-M."/>
            <person name="Maupin R."/>
            <person name="Latreille P."/>
            <person name="Wendl M.C."/>
            <person name="Yang S.-P."/>
            <person name="Pohl C."/>
            <person name="Wallis J.W."/>
            <person name="Spieth J."/>
            <person name="Bieri T.A."/>
            <person name="Berkowicz N."/>
            <person name="Nelson J.O."/>
            <person name="Osborne J."/>
            <person name="Ding L."/>
            <person name="Meyer R."/>
            <person name="Sabo A."/>
            <person name="Shotland Y."/>
            <person name="Sinha P."/>
            <person name="Wohldmann P.E."/>
            <person name="Cook L.L."/>
            <person name="Hickenbotham M.T."/>
            <person name="Eldred J."/>
            <person name="Williams D."/>
            <person name="Jones T.A."/>
            <person name="She X."/>
            <person name="Ciccarelli F.D."/>
            <person name="Izaurralde E."/>
            <person name="Taylor J."/>
            <person name="Schmutz J."/>
            <person name="Myers R.M."/>
            <person name="Cox D.R."/>
            <person name="Huang X."/>
            <person name="McPherson J.D."/>
            <person name="Mardis E.R."/>
            <person name="Clifton S.W."/>
            <person name="Warren W.C."/>
            <person name="Chinwalla A.T."/>
            <person name="Eddy S.R."/>
            <person name="Marra M.A."/>
            <person name="Ovcharenko I."/>
            <person name="Furey T.S."/>
            <person name="Miller W."/>
            <person name="Eichler E.E."/>
            <person name="Bork P."/>
            <person name="Suyama M."/>
            <person name="Torrents D."/>
            <person name="Waterston R.H."/>
            <person name="Wilson R.K."/>
        </authorList>
    </citation>
    <scope>NUCLEOTIDE SEQUENCE [LARGE SCALE GENOMIC DNA]</scope>
</reference>
<reference key="4">
    <citation type="submission" date="2005-09" db="EMBL/GenBank/DDBJ databases">
        <authorList>
            <person name="Mural R.J."/>
            <person name="Istrail S."/>
            <person name="Sutton G."/>
            <person name="Florea L."/>
            <person name="Halpern A.L."/>
            <person name="Mobarry C.M."/>
            <person name="Lippert R."/>
            <person name="Walenz B."/>
            <person name="Shatkay H."/>
            <person name="Dew I."/>
            <person name="Miller J.R."/>
            <person name="Flanigan M.J."/>
            <person name="Edwards N.J."/>
            <person name="Bolanos R."/>
            <person name="Fasulo D."/>
            <person name="Halldorsson B.V."/>
            <person name="Hannenhalli S."/>
            <person name="Turner R."/>
            <person name="Yooseph S."/>
            <person name="Lu F."/>
            <person name="Nusskern D.R."/>
            <person name="Shue B.C."/>
            <person name="Zheng X.H."/>
            <person name="Zhong F."/>
            <person name="Delcher A.L."/>
            <person name="Huson D.H."/>
            <person name="Kravitz S.A."/>
            <person name="Mouchard L."/>
            <person name="Reinert K."/>
            <person name="Remington K.A."/>
            <person name="Clark A.G."/>
            <person name="Waterman M.S."/>
            <person name="Eichler E.E."/>
            <person name="Adams M.D."/>
            <person name="Hunkapiller M.W."/>
            <person name="Myers E.W."/>
            <person name="Venter J.C."/>
        </authorList>
    </citation>
    <scope>NUCLEOTIDE SEQUENCE [LARGE SCALE GENOMIC DNA]</scope>
</reference>
<reference key="5">
    <citation type="journal article" date="2004" name="Genome Res.">
        <title>The status, quality, and expansion of the NIH full-length cDNA project: the Mammalian Gene Collection (MGC).</title>
        <authorList>
            <consortium name="The MGC Project Team"/>
        </authorList>
    </citation>
    <scope>NUCLEOTIDE SEQUENCE [LARGE SCALE MRNA] (ISOFORM 2)</scope>
</reference>
<reference key="6">
    <citation type="journal article" date="2001" name="Am. J. Hum. Genet.">
        <title>Two genes that map to the STSL locus cause sitosterolemia: genomic structure and spectrum of mutations involving sterolin-1 and sterolin-2, encoded by ABCG5 and ABCG8, respectively.</title>
        <authorList>
            <person name="Lu K."/>
            <person name="Lee M.-H."/>
            <person name="Hazard S."/>
            <person name="Brooks-Wilson A."/>
            <person name="Hidaka H."/>
            <person name="Kojima H."/>
            <person name="Ose L."/>
            <person name="Stalenhoef A.F.H."/>
            <person name="Mietinnen T."/>
            <person name="Bjorkhem I."/>
            <person name="Bruckert E."/>
            <person name="Pandya A."/>
            <person name="Brewer H.B. Jr."/>
            <person name="Salen G."/>
            <person name="Dean M."/>
            <person name="Srivastava A.K."/>
            <person name="Patel S.B."/>
        </authorList>
    </citation>
    <scope>NUCLEOTIDE SEQUENCE [MRNA] OF 1-88 (ISOFORM 1)</scope>
    <scope>VARIANTS STSL2 GLN-146; HIS-389; PRO-419; HIS-419 AND SER-550</scope>
    <scope>VARIANT GLU-604</scope>
</reference>
<reference key="7">
    <citation type="journal article" date="2001" name="J. Lipid Res.">
        <title>Role of ABCG1 and other ABCG family members in lipid metabolism.</title>
        <authorList>
            <person name="Schmitz G."/>
            <person name="Langmann T."/>
            <person name="Heimerl S."/>
        </authorList>
    </citation>
    <scope>REVIEW</scope>
</reference>
<reference key="8">
    <citation type="journal article" date="2003" name="J. Biol. Chem.">
        <title>ABCG5 and ABCG8 are obligate heterodimers for protein trafficking and biliary cholesterol excretion.</title>
        <authorList>
            <person name="Graf G.A."/>
            <person name="Yu L."/>
            <person name="Li W.P."/>
            <person name="Gerard R."/>
            <person name="Tuma P.L."/>
            <person name="Cohen J.C."/>
            <person name="Hobbs H.H."/>
        </authorList>
    </citation>
    <scope>SUBCELLULAR LOCATION</scope>
</reference>
<reference key="9">
    <citation type="journal article" date="2006" name="Biochemistry">
        <title>Purification and ATP hydrolysis of the putative cholesterol transporters ABCG5 and ABCG8.</title>
        <authorList>
            <person name="Wang Z."/>
            <person name="Stalcup L.D."/>
            <person name="Harvey B.J."/>
            <person name="Weber J."/>
            <person name="Chloupkova M."/>
            <person name="Dumont M.E."/>
            <person name="Dean M."/>
            <person name="Urbatsch I.L."/>
        </authorList>
    </citation>
    <scope>FUNCTION</scope>
    <scope>SUBUNIT</scope>
    <scope>SUBCELLULAR LOCATION</scope>
</reference>
<reference key="10">
    <citation type="journal article" date="2010" name="Biochemistry">
        <title>Bile acids stimulate ATP hydrolysis in the purified cholesterol transporter ABCG5/G8.</title>
        <authorList>
            <person name="Johnson B.J."/>
            <person name="Lee J.Y."/>
            <person name="Pickert A."/>
            <person name="Urbatsch I.L."/>
        </authorList>
    </citation>
    <scope>FUNCTION</scope>
    <scope>SUBUNIT</scope>
    <scope>GLYCOSYLATION</scope>
    <scope>ACTIVITY REGULATION</scope>
    <scope>MUTAGENESIS OF 92-LYS-THR-93</scope>
</reference>
<reference evidence="23" key="11">
    <citation type="journal article" date="2016" name="Nature">
        <title>Crystal structure of the human sterol transporter ABCG5/ABCG8.</title>
        <authorList>
            <person name="Lee J.Y."/>
            <person name="Kinch L.N."/>
            <person name="Borek D.M."/>
            <person name="Wang J."/>
            <person name="Wang J."/>
            <person name="Urbatsch I.L."/>
            <person name="Xie X.S."/>
            <person name="Grishin N.V."/>
            <person name="Cohen J.C."/>
            <person name="Otwinowski Z."/>
            <person name="Hobbs H.H."/>
            <person name="Rosenbaum D.M."/>
        </authorList>
    </citation>
    <scope>X-RAY CRYSTALLOGRAPHY (3.93 ANGSTROMS) IN COMPLEX WITH ABCG8</scope>
    <scope>FUNCTION</scope>
    <scope>ACTIVITY REGULATION</scope>
    <scope>MUTAGENESIS OF TYR-432 AND ALA-540</scope>
    <scope>SUBUNIT</scope>
    <scope>TOPOLOGY</scope>
</reference>
<reference key="12">
    <citation type="journal article" date="2001" name="Hum. Mutat.">
        <title>Mutations in ATP-cassette binding proteins G5 (ABCG5) and G8 (ABCG8) causing sitosterolemia.</title>
        <authorList>
            <person name="Hubacek J.A."/>
            <person name="Berge K.E."/>
            <person name="Cohen J.C."/>
            <person name="Hobbs H.H."/>
        </authorList>
    </citation>
    <scope>VARIANT STSL2 LYS-437</scope>
    <scope>VARIANTS VAL-523; TYR-600; GLU-604 AND VAL-622</scope>
</reference>
<reference key="13">
    <citation type="journal article" date="2004" name="J. Biol. Chem.">
        <title>Missense mutations in ABCG5 and ABCG8 disrupt heterodimerization and trafficking.</title>
        <authorList>
            <person name="Graf G.A."/>
            <person name="Cohen J.C."/>
            <person name="Hobbs H.H."/>
        </authorList>
    </citation>
    <scope>CHARACTERIZATION OF VARIANTS STSL2 GLN-146; HIS-389; PRO-419; HIS-419 AND LYS-437</scope>
    <scope>FUNCTION</scope>
</reference>
<reference key="14">
    <citation type="journal article" date="2022" name="Front. Cardiovasc. Med.">
        <title>Clinical and genetic analysis of a family with sitosterolemia caused by a novel ATP-binding cassette subfamily G member 5 compound heterozygous mutation.</title>
        <authorList>
            <person name="Shen M.F."/>
            <person name="Hu Y.N."/>
            <person name="Chen W.X."/>
            <person name="Liao L.S."/>
            <person name="Wu M."/>
            <person name="Wu Q.Y."/>
            <person name="Zhang J.H."/>
            <person name="Zhang Y.P."/>
            <person name="Luo J.W."/>
            <person name="Lin X.F."/>
        </authorList>
    </citation>
    <scope>VARIANT STSL2 ARG-99</scope>
</reference>
<dbReference type="EC" id="7.6.2.-" evidence="1"/>
<dbReference type="EMBL" id="AF320293">
    <property type="protein sequence ID" value="AAG40003.1"/>
    <property type="molecule type" value="mRNA"/>
</dbReference>
<dbReference type="EMBL" id="AF312715">
    <property type="protein sequence ID" value="AAG53099.1"/>
    <property type="molecule type" value="mRNA"/>
</dbReference>
<dbReference type="EMBL" id="AC011242">
    <property type="status" value="NOT_ANNOTATED_CDS"/>
    <property type="molecule type" value="Genomic_DNA"/>
</dbReference>
<dbReference type="EMBL" id="AC108476">
    <property type="status" value="NOT_ANNOTATED_CDS"/>
    <property type="molecule type" value="Genomic_DNA"/>
</dbReference>
<dbReference type="EMBL" id="CH471053">
    <property type="protein sequence ID" value="EAX00286.1"/>
    <property type="molecule type" value="Genomic_DNA"/>
</dbReference>
<dbReference type="EMBL" id="BC111541">
    <property type="protein sequence ID" value="AAI11542.1"/>
    <property type="molecule type" value="mRNA"/>
</dbReference>
<dbReference type="EMBL" id="AF404106">
    <property type="protein sequence ID" value="AAK85387.1"/>
    <property type="molecule type" value="Genomic_DNA"/>
</dbReference>
<dbReference type="EMBL" id="AF404107">
    <property type="protein sequence ID" value="AAK85388.1"/>
    <property type="molecule type" value="Genomic_DNA"/>
</dbReference>
<dbReference type="CCDS" id="CCDS1814.1">
    <molecule id="Q9H222-1"/>
</dbReference>
<dbReference type="RefSeq" id="NP_071881.1">
    <molecule id="Q9H222-1"/>
    <property type="nucleotide sequence ID" value="NM_022436.3"/>
</dbReference>
<dbReference type="PDB" id="5DO7">
    <property type="method" value="X-ray"/>
    <property type="resolution" value="3.93 A"/>
    <property type="chains" value="A/C=1-651"/>
</dbReference>
<dbReference type="PDB" id="7JR7">
    <property type="method" value="EM"/>
    <property type="resolution" value="3.30 A"/>
    <property type="chains" value="A=1-651"/>
</dbReference>
<dbReference type="PDB" id="7R87">
    <property type="method" value="EM"/>
    <property type="resolution" value="3.40 A"/>
    <property type="chains" value="A=1-651"/>
</dbReference>
<dbReference type="PDB" id="7R88">
    <property type="method" value="EM"/>
    <property type="resolution" value="3.50 A"/>
    <property type="chains" value="A=1-651"/>
</dbReference>
<dbReference type="PDB" id="7R89">
    <property type="method" value="EM"/>
    <property type="resolution" value="2.60 A"/>
    <property type="chains" value="A=1-651"/>
</dbReference>
<dbReference type="PDB" id="7R8A">
    <property type="method" value="EM"/>
    <property type="resolution" value="2.90 A"/>
    <property type="chains" value="A=1-651"/>
</dbReference>
<dbReference type="PDB" id="7R8B">
    <property type="method" value="EM"/>
    <property type="resolution" value="3.10 A"/>
    <property type="chains" value="A=1-651"/>
</dbReference>
<dbReference type="PDB" id="8CUB">
    <property type="method" value="X-ray"/>
    <property type="resolution" value="4.05 A"/>
    <property type="chains" value="A/C=3-651"/>
</dbReference>
<dbReference type="PDBsum" id="5DO7"/>
<dbReference type="PDBsum" id="7JR7"/>
<dbReference type="PDBsum" id="7R87"/>
<dbReference type="PDBsum" id="7R88"/>
<dbReference type="PDBsum" id="7R89"/>
<dbReference type="PDBsum" id="7R8A"/>
<dbReference type="PDBsum" id="7R8B"/>
<dbReference type="PDBsum" id="8CUB"/>
<dbReference type="EMDB" id="EMD-22443"/>
<dbReference type="EMDB" id="EMD-24310"/>
<dbReference type="EMDB" id="EMD-24311"/>
<dbReference type="EMDB" id="EMD-24312"/>
<dbReference type="EMDB" id="EMD-24313"/>
<dbReference type="EMDB" id="EMD-24314"/>
<dbReference type="SMR" id="Q9H222"/>
<dbReference type="BioGRID" id="122124">
    <property type="interactions" value="3"/>
</dbReference>
<dbReference type="CORUM" id="Q9H222"/>
<dbReference type="DIP" id="DIP-42630N"/>
<dbReference type="FunCoup" id="Q9H222">
    <property type="interactions" value="89"/>
</dbReference>
<dbReference type="IntAct" id="Q9H222">
    <property type="interactions" value="5"/>
</dbReference>
<dbReference type="MINT" id="Q9H222"/>
<dbReference type="STRING" id="9606.ENSP00000384513"/>
<dbReference type="DrugBank" id="DB08834">
    <property type="generic name" value="Tauroursodeoxycholic acid"/>
</dbReference>
<dbReference type="DrugBank" id="DB11635">
    <property type="generic name" value="Tocofersolan"/>
</dbReference>
<dbReference type="TCDB" id="3.A.1.204.5">
    <property type="family name" value="the atp-binding cassette (abc) superfamily"/>
</dbReference>
<dbReference type="GlyCosmos" id="Q9H222">
    <property type="glycosylation" value="2 sites, No reported glycans"/>
</dbReference>
<dbReference type="GlyGen" id="Q9H222">
    <property type="glycosylation" value="3 sites, 1 O-linked glycan (1 site)"/>
</dbReference>
<dbReference type="iPTMnet" id="Q9H222"/>
<dbReference type="PhosphoSitePlus" id="Q9H222"/>
<dbReference type="BioMuta" id="ABCG5"/>
<dbReference type="DMDM" id="17432917"/>
<dbReference type="MassIVE" id="Q9H222"/>
<dbReference type="PaxDb" id="9606-ENSP00000260645"/>
<dbReference type="PeptideAtlas" id="Q9H222"/>
<dbReference type="Antibodypedia" id="14899">
    <property type="antibodies" value="228 antibodies from 31 providers"/>
</dbReference>
<dbReference type="DNASU" id="64240"/>
<dbReference type="Ensembl" id="ENST00000405322.8">
    <molecule id="Q9H222-1"/>
    <property type="protein sequence ID" value="ENSP00000384513.2"/>
    <property type="gene ID" value="ENSG00000138075.14"/>
</dbReference>
<dbReference type="GeneID" id="64240"/>
<dbReference type="KEGG" id="hsa:64240"/>
<dbReference type="MANE-Select" id="ENST00000405322.8">
    <property type="protein sequence ID" value="ENSP00000384513.2"/>
    <property type="RefSeq nucleotide sequence ID" value="NM_022436.3"/>
    <property type="RefSeq protein sequence ID" value="NP_071881.1"/>
</dbReference>
<dbReference type="UCSC" id="uc002rtn.3">
    <molecule id="Q9H222-1"/>
    <property type="organism name" value="human"/>
</dbReference>
<dbReference type="AGR" id="HGNC:13886"/>
<dbReference type="CTD" id="64240"/>
<dbReference type="DisGeNET" id="64240"/>
<dbReference type="GeneCards" id="ABCG5"/>
<dbReference type="GeneReviews" id="ABCG5"/>
<dbReference type="HGNC" id="HGNC:13886">
    <property type="gene designation" value="ABCG5"/>
</dbReference>
<dbReference type="HPA" id="ENSG00000138075">
    <property type="expression patterns" value="Group enriched (intestine, liver)"/>
</dbReference>
<dbReference type="MalaCards" id="ABCG5"/>
<dbReference type="MIM" id="605459">
    <property type="type" value="gene"/>
</dbReference>
<dbReference type="MIM" id="618666">
    <property type="type" value="phenotype"/>
</dbReference>
<dbReference type="neXtProt" id="NX_Q9H222"/>
<dbReference type="OpenTargets" id="ENSG00000138075"/>
<dbReference type="Orphanet" id="391665">
    <property type="disease" value="Homozygous familial hypercholesterolemia"/>
</dbReference>
<dbReference type="Orphanet" id="2882">
    <property type="disease" value="Sitosterolemia"/>
</dbReference>
<dbReference type="PharmGKB" id="PA24411"/>
<dbReference type="VEuPathDB" id="HostDB:ENSG00000138075"/>
<dbReference type="eggNOG" id="KOG0061">
    <property type="taxonomic scope" value="Eukaryota"/>
</dbReference>
<dbReference type="GeneTree" id="ENSGT00940000157985"/>
<dbReference type="HOGENOM" id="CLU_000604_57_9_1"/>
<dbReference type="InParanoid" id="Q9H222"/>
<dbReference type="OMA" id="RVRPWWD"/>
<dbReference type="OrthoDB" id="66620at2759"/>
<dbReference type="PAN-GO" id="Q9H222">
    <property type="GO annotations" value="6 GO annotations based on evolutionary models"/>
</dbReference>
<dbReference type="PhylomeDB" id="Q9H222"/>
<dbReference type="TreeFam" id="TF105212"/>
<dbReference type="PathwayCommons" id="Q9H222"/>
<dbReference type="Reactome" id="R-HSA-1369062">
    <property type="pathway name" value="ABC transporters in lipid homeostasis"/>
</dbReference>
<dbReference type="Reactome" id="R-HSA-5679090">
    <property type="pathway name" value="Defective ABCG8 causes GBD4 and sitosterolemia"/>
</dbReference>
<dbReference type="Reactome" id="R-HSA-5679096">
    <property type="pathway name" value="Defective ABCG5 causes sitosterolemia"/>
</dbReference>
<dbReference type="Reactome" id="R-HSA-9029569">
    <property type="pathway name" value="NR1H3 &amp; NR1H2 regulate gene expression linked to cholesterol transport and efflux"/>
</dbReference>
<dbReference type="SignaLink" id="Q9H222"/>
<dbReference type="SIGNOR" id="Q9H222"/>
<dbReference type="BioGRID-ORCS" id="64240">
    <property type="hits" value="10 hits in 1149 CRISPR screens"/>
</dbReference>
<dbReference type="ChiTaRS" id="ABCG5">
    <property type="organism name" value="human"/>
</dbReference>
<dbReference type="GeneWiki" id="ABCG5"/>
<dbReference type="GenomeRNAi" id="64240"/>
<dbReference type="Pharos" id="Q9H222">
    <property type="development level" value="Tbio"/>
</dbReference>
<dbReference type="PRO" id="PR:Q9H222"/>
<dbReference type="Proteomes" id="UP000005640">
    <property type="component" value="Chromosome 2"/>
</dbReference>
<dbReference type="RNAct" id="Q9H222">
    <property type="molecule type" value="protein"/>
</dbReference>
<dbReference type="Bgee" id="ENSG00000138075">
    <property type="expression patterns" value="Expressed in jejunal mucosa and 43 other cell types or tissues"/>
</dbReference>
<dbReference type="GO" id="GO:0016324">
    <property type="term" value="C:apical plasma membrane"/>
    <property type="evidence" value="ECO:0000315"/>
    <property type="project" value="BHF-UCL"/>
</dbReference>
<dbReference type="GO" id="GO:0043190">
    <property type="term" value="C:ATP-binding cassette (ABC) transporter complex"/>
    <property type="evidence" value="ECO:0000314"/>
    <property type="project" value="UniProtKB"/>
</dbReference>
<dbReference type="GO" id="GO:0005886">
    <property type="term" value="C:plasma membrane"/>
    <property type="evidence" value="ECO:0000250"/>
    <property type="project" value="UniProtKB"/>
</dbReference>
<dbReference type="GO" id="GO:0043235">
    <property type="term" value="C:receptor complex"/>
    <property type="evidence" value="ECO:0000314"/>
    <property type="project" value="BHF-UCL"/>
</dbReference>
<dbReference type="GO" id="GO:0140359">
    <property type="term" value="F:ABC-type transporter activity"/>
    <property type="evidence" value="ECO:0007669"/>
    <property type="project" value="InterPro"/>
</dbReference>
<dbReference type="GO" id="GO:0005524">
    <property type="term" value="F:ATP binding"/>
    <property type="evidence" value="ECO:0007669"/>
    <property type="project" value="UniProtKB-KW"/>
</dbReference>
<dbReference type="GO" id="GO:0016887">
    <property type="term" value="F:ATP hydrolysis activity"/>
    <property type="evidence" value="ECO:0007669"/>
    <property type="project" value="InterPro"/>
</dbReference>
<dbReference type="GO" id="GO:0042626">
    <property type="term" value="F:ATPase-coupled transmembrane transporter activity"/>
    <property type="evidence" value="ECO:0000314"/>
    <property type="project" value="UniProtKB"/>
</dbReference>
<dbReference type="GO" id="GO:0120020">
    <property type="term" value="F:cholesterol transfer activity"/>
    <property type="evidence" value="ECO:0007669"/>
    <property type="project" value="Ensembl"/>
</dbReference>
<dbReference type="GO" id="GO:0046872">
    <property type="term" value="F:metal ion binding"/>
    <property type="evidence" value="ECO:0007669"/>
    <property type="project" value="UniProtKB-KW"/>
</dbReference>
<dbReference type="GO" id="GO:0046982">
    <property type="term" value="F:protein heterodimerization activity"/>
    <property type="evidence" value="ECO:0000353"/>
    <property type="project" value="BHF-UCL"/>
</dbReference>
<dbReference type="GO" id="GO:0033344">
    <property type="term" value="P:cholesterol efflux"/>
    <property type="evidence" value="ECO:0000315"/>
    <property type="project" value="UniProtKB"/>
</dbReference>
<dbReference type="GO" id="GO:0042632">
    <property type="term" value="P:cholesterol homeostasis"/>
    <property type="evidence" value="ECO:0000315"/>
    <property type="project" value="UniProtKB"/>
</dbReference>
<dbReference type="GO" id="GO:0030299">
    <property type="term" value="P:intestinal cholesterol absorption"/>
    <property type="evidence" value="ECO:0000305"/>
    <property type="project" value="BHF-UCL"/>
</dbReference>
<dbReference type="GO" id="GO:0045796">
    <property type="term" value="P:negative regulation of intestinal cholesterol absorption"/>
    <property type="evidence" value="ECO:0000315"/>
    <property type="project" value="BHF-UCL"/>
</dbReference>
<dbReference type="GO" id="GO:0010949">
    <property type="term" value="P:negative regulation of intestinal phytosterol absorption"/>
    <property type="evidence" value="ECO:0000315"/>
    <property type="project" value="BHF-UCL"/>
</dbReference>
<dbReference type="GO" id="GO:0010212">
    <property type="term" value="P:response to ionizing radiation"/>
    <property type="evidence" value="ECO:0007669"/>
    <property type="project" value="Ensembl"/>
</dbReference>
<dbReference type="GO" id="GO:0014850">
    <property type="term" value="P:response to muscle activity"/>
    <property type="evidence" value="ECO:0007669"/>
    <property type="project" value="Ensembl"/>
</dbReference>
<dbReference type="GO" id="GO:0007584">
    <property type="term" value="P:response to nutrient"/>
    <property type="evidence" value="ECO:0007669"/>
    <property type="project" value="Ensembl"/>
</dbReference>
<dbReference type="GO" id="GO:0009410">
    <property type="term" value="P:response to xenobiotic stimulus"/>
    <property type="evidence" value="ECO:0007669"/>
    <property type="project" value="Ensembl"/>
</dbReference>
<dbReference type="GO" id="GO:0015918">
    <property type="term" value="P:sterol transport"/>
    <property type="evidence" value="ECO:0000250"/>
    <property type="project" value="UniProtKB"/>
</dbReference>
<dbReference type="GO" id="GO:0055085">
    <property type="term" value="P:transmembrane transport"/>
    <property type="evidence" value="ECO:0000318"/>
    <property type="project" value="GO_Central"/>
</dbReference>
<dbReference type="GO" id="GO:0070328">
    <property type="term" value="P:triglyceride homeostasis"/>
    <property type="evidence" value="ECO:0007669"/>
    <property type="project" value="Ensembl"/>
</dbReference>
<dbReference type="CDD" id="cd03234">
    <property type="entry name" value="ABCG_White"/>
    <property type="match status" value="1"/>
</dbReference>
<dbReference type="FunFam" id="3.40.50.300:FF:001069">
    <property type="entry name" value="ATP-binding cassette, sub-family G (WHITE), member 5"/>
    <property type="match status" value="1"/>
</dbReference>
<dbReference type="Gene3D" id="3.40.50.300">
    <property type="entry name" value="P-loop containing nucleotide triphosphate hydrolases"/>
    <property type="match status" value="1"/>
</dbReference>
<dbReference type="InterPro" id="IPR003593">
    <property type="entry name" value="AAA+_ATPase"/>
</dbReference>
<dbReference type="InterPro" id="IPR013525">
    <property type="entry name" value="ABC2_TM"/>
</dbReference>
<dbReference type="InterPro" id="IPR003439">
    <property type="entry name" value="ABC_transporter-like_ATP-bd"/>
</dbReference>
<dbReference type="InterPro" id="IPR043926">
    <property type="entry name" value="ABCG_dom"/>
</dbReference>
<dbReference type="InterPro" id="IPR050352">
    <property type="entry name" value="ABCG_transporters"/>
</dbReference>
<dbReference type="InterPro" id="IPR027417">
    <property type="entry name" value="P-loop_NTPase"/>
</dbReference>
<dbReference type="PANTHER" id="PTHR48041">
    <property type="entry name" value="ABC TRANSPORTER G FAMILY MEMBER 28"/>
    <property type="match status" value="1"/>
</dbReference>
<dbReference type="PANTHER" id="PTHR48041:SF113">
    <property type="entry name" value="ATP-BINDING CASSETTE SUB-FAMILY G MEMBER 5"/>
    <property type="match status" value="1"/>
</dbReference>
<dbReference type="Pfam" id="PF01061">
    <property type="entry name" value="ABC2_membrane"/>
    <property type="match status" value="1"/>
</dbReference>
<dbReference type="Pfam" id="PF19055">
    <property type="entry name" value="ABC2_membrane_7"/>
    <property type="match status" value="1"/>
</dbReference>
<dbReference type="Pfam" id="PF00005">
    <property type="entry name" value="ABC_tran"/>
    <property type="match status" value="1"/>
</dbReference>
<dbReference type="SMART" id="SM00382">
    <property type="entry name" value="AAA"/>
    <property type="match status" value="1"/>
</dbReference>
<dbReference type="SUPFAM" id="SSF52540">
    <property type="entry name" value="P-loop containing nucleoside triphosphate hydrolases"/>
    <property type="match status" value="1"/>
</dbReference>
<dbReference type="PROSITE" id="PS50893">
    <property type="entry name" value="ABC_TRANSPORTER_2"/>
    <property type="match status" value="1"/>
</dbReference>
<feature type="chain" id="PRO_0000093393" description="ATP-binding cassette sub-family G member 5">
    <location>
        <begin position="1"/>
        <end position="651"/>
    </location>
</feature>
<feature type="topological domain" description="Cytoplasmic" evidence="13">
    <location>
        <begin position="1"/>
        <end position="383"/>
    </location>
</feature>
<feature type="transmembrane region" description="Helical; Name=1" evidence="13">
    <location>
        <begin position="384"/>
        <end position="404"/>
    </location>
</feature>
<feature type="topological domain" description="Extracellular" evidence="13">
    <location>
        <begin position="405"/>
        <end position="421"/>
    </location>
</feature>
<feature type="transmembrane region" description="Helical; Name=2" evidence="13">
    <location>
        <begin position="422"/>
        <end position="442"/>
    </location>
</feature>
<feature type="topological domain" description="Cytoplasmic" evidence="13">
    <location>
        <begin position="443"/>
        <end position="467"/>
    </location>
</feature>
<feature type="transmembrane region" description="Helical; Name=3" evidence="13">
    <location>
        <begin position="468"/>
        <end position="489"/>
    </location>
</feature>
<feature type="topological domain" description="Extracellular" evidence="13">
    <location>
        <begin position="490"/>
        <end position="500"/>
    </location>
</feature>
<feature type="transmembrane region" description="Helical; Name=4" evidence="13">
    <location>
        <begin position="501"/>
        <end position="521"/>
    </location>
</feature>
<feature type="topological domain" description="Cytoplasmic" evidence="13">
    <location>
        <begin position="522"/>
        <end position="528"/>
    </location>
</feature>
<feature type="transmembrane region" description="Helical; Name=5" evidence="13">
    <location>
        <begin position="529"/>
        <end position="549"/>
    </location>
</feature>
<feature type="topological domain" description="Extracellular" evidence="13">
    <location>
        <begin position="550"/>
        <end position="623"/>
    </location>
</feature>
<feature type="transmembrane region" description="Helical; Name=6" evidence="13">
    <location>
        <begin position="624"/>
        <end position="644"/>
    </location>
</feature>
<feature type="topological domain" description="Cytoplasmic" evidence="13">
    <location>
        <begin position="645"/>
        <end position="651"/>
    </location>
</feature>
<feature type="domain" description="ABC transporter" evidence="3">
    <location>
        <begin position="52"/>
        <end position="293"/>
    </location>
</feature>
<feature type="domain" description="ABC transmembrane type-2">
    <location>
        <begin position="388"/>
        <end position="645"/>
    </location>
</feature>
<feature type="region of interest" description="Disordered" evidence="4">
    <location>
        <begin position="1"/>
        <end position="32"/>
    </location>
</feature>
<feature type="binding site" evidence="3">
    <location>
        <begin position="86"/>
        <end position="93"/>
    </location>
    <ligand>
        <name>ATP</name>
        <dbReference type="ChEBI" id="CHEBI:30616"/>
    </ligand>
</feature>
<feature type="glycosylation site" description="N-linked (GlcNAc...) asparagine" evidence="2">
    <location>
        <position position="584"/>
    </location>
</feature>
<feature type="glycosylation site" description="N-linked (GlcNAc...) asparagine" evidence="2">
    <location>
        <position position="591"/>
    </location>
</feature>
<feature type="splice variant" id="VSP_055770" description="In isoform 2." evidence="17">
    <location>
        <begin position="1"/>
        <end position="395"/>
    </location>
</feature>
<feature type="sequence variant" id="VAR_048142" description="In dbSNP:rs6756629.">
    <original>R</original>
    <variation>C</variation>
    <location>
        <position position="50"/>
    </location>
</feature>
<feature type="sequence variant" id="VAR_086593" description="In STSL2; uncertain significance; dbSNP:rs2104866076." evidence="14">
    <original>M</original>
    <variation>R</variation>
    <location>
        <position position="99"/>
    </location>
</feature>
<feature type="sequence variant" id="VAR_012244" description="In STSL2; decreased maturation of glycan chains; dbSNP:rs758551848." evidence="7 10">
    <original>E</original>
    <variation>Q</variation>
    <location>
        <position position="146"/>
    </location>
</feature>
<feature type="sequence variant" id="VAR_012245" description="In STSL2; loss of normal maturation of glycan chains; dbSNP:rs119480069." evidence="6 7 10">
    <original>R</original>
    <variation>H</variation>
    <location>
        <position position="389"/>
    </location>
</feature>
<feature type="sequence variant" id="VAR_012246" description="In STSL2; loss of normal maturation of glycan chains; dbSNP:rs119479067." evidence="6 7 10">
    <original>R</original>
    <variation>H</variation>
    <location>
        <position position="419"/>
    </location>
</feature>
<feature type="sequence variant" id="VAR_012247" description="In STSL2; strongly decreased maturation of glycan chains; dbSNP:rs119479067." evidence="6 7 10">
    <original>R</original>
    <variation>P</variation>
    <location>
        <position position="419"/>
    </location>
</feature>
<feature type="sequence variant" id="VAR_020781" description="In STSL2; loss of normal maturation of glycan chains; dbSNP:rs575266356." evidence="8 10">
    <original>N</original>
    <variation>K</variation>
    <location>
        <position position="437"/>
    </location>
</feature>
<feature type="sequence variant" id="VAR_033457" description="In dbSNP:rs17031672.">
    <original>T</original>
    <variation>S</variation>
    <location>
        <position position="517"/>
    </location>
</feature>
<feature type="sequence variant" id="VAR_020782" description="In dbSNP:rs140899003." evidence="8">
    <original>I</original>
    <variation>V</variation>
    <location>
        <position position="523"/>
    </location>
</feature>
<feature type="sequence variant" id="VAR_012248" description="In STSL2; dbSNP:rs1666696511." evidence="7">
    <original>R</original>
    <variation>S</variation>
    <location>
        <position position="550"/>
    </location>
</feature>
<feature type="sequence variant" id="VAR_020783" description="In dbSNP:rs779109455." evidence="8">
    <original>C</original>
    <variation>Y</variation>
    <location>
        <position position="600"/>
    </location>
</feature>
<feature type="sequence variant" id="VAR_012249" description="In dbSNP:rs6720173." evidence="5 6 7 8">
    <original>Q</original>
    <variation>E</variation>
    <location>
        <position position="604"/>
    </location>
</feature>
<feature type="sequence variant" id="VAR_020784" description="In dbSNP:rs140374206." evidence="8">
    <original>M</original>
    <variation>V</variation>
    <location>
        <position position="622"/>
    </location>
</feature>
<feature type="mutagenesis site" description="Abolishes increase of the very low basal ATPase activity by cholate." evidence="12">
    <original>KT</original>
    <variation>RA</variation>
    <location>
        <begin position="92"/>
        <end position="93"/>
    </location>
</feature>
<feature type="mutagenesis site" description="Strongly decreases cholesterol secretion into bile." evidence="13">
    <original>Y</original>
    <variation>A</variation>
    <location>
        <position position="432"/>
    </location>
</feature>
<feature type="mutagenesis site" description="Strongly decreases cholesterol secretion into bile." evidence="13">
    <original>A</original>
    <variation>F</variation>
    <location>
        <position position="540"/>
    </location>
</feature>
<feature type="strand" evidence="25">
    <location>
        <begin position="37"/>
        <end position="45"/>
    </location>
</feature>
<feature type="strand" evidence="25">
    <location>
        <begin position="69"/>
        <end position="77"/>
    </location>
</feature>
<feature type="strand" evidence="25">
    <location>
        <begin position="81"/>
        <end position="86"/>
    </location>
</feature>
<feature type="helix" evidence="27">
    <location>
        <begin position="88"/>
        <end position="90"/>
    </location>
</feature>
<feature type="helix" evidence="25">
    <location>
        <begin position="92"/>
        <end position="100"/>
    </location>
</feature>
<feature type="turn" evidence="27">
    <location>
        <begin position="104"/>
        <end position="106"/>
    </location>
</feature>
<feature type="strand" evidence="25">
    <location>
        <begin position="109"/>
        <end position="115"/>
    </location>
</feature>
<feature type="strand" evidence="26">
    <location>
        <begin position="118"/>
        <end position="120"/>
    </location>
</feature>
<feature type="turn" evidence="25">
    <location>
        <begin position="126"/>
        <end position="128"/>
    </location>
</feature>
<feature type="strand" evidence="25">
    <location>
        <begin position="129"/>
        <end position="132"/>
    </location>
</feature>
<feature type="strand" evidence="25">
    <location>
        <begin position="140"/>
        <end position="143"/>
    </location>
</feature>
<feature type="helix" evidence="25">
    <location>
        <begin position="144"/>
        <end position="155"/>
    </location>
</feature>
<feature type="helix" evidence="25">
    <location>
        <begin position="161"/>
        <end position="174"/>
    </location>
</feature>
<feature type="turn" evidence="25">
    <location>
        <begin position="179"/>
        <end position="182"/>
    </location>
</feature>
<feature type="turn" evidence="25">
    <location>
        <begin position="188"/>
        <end position="191"/>
    </location>
</feature>
<feature type="helix" evidence="25">
    <location>
        <begin position="195"/>
        <end position="207"/>
    </location>
</feature>
<feature type="strand" evidence="25">
    <location>
        <begin position="212"/>
        <end position="217"/>
    </location>
</feature>
<feature type="turn" evidence="25">
    <location>
        <begin position="219"/>
        <end position="222"/>
    </location>
</feature>
<feature type="helix" evidence="25">
    <location>
        <begin position="225"/>
        <end position="240"/>
    </location>
</feature>
<feature type="strand" evidence="25">
    <location>
        <begin position="244"/>
        <end position="248"/>
    </location>
</feature>
<feature type="helix" evidence="25">
    <location>
        <begin position="254"/>
        <end position="256"/>
    </location>
</feature>
<feature type="turn" evidence="25">
    <location>
        <begin position="257"/>
        <end position="259"/>
    </location>
</feature>
<feature type="strand" evidence="25">
    <location>
        <begin position="261"/>
        <end position="267"/>
    </location>
</feature>
<feature type="strand" evidence="25">
    <location>
        <begin position="270"/>
        <end position="275"/>
    </location>
</feature>
<feature type="helix" evidence="25">
    <location>
        <begin position="277"/>
        <end position="286"/>
    </location>
</feature>
<feature type="strand" evidence="25">
    <location>
        <begin position="293"/>
        <end position="295"/>
    </location>
</feature>
<feature type="helix" evidence="25">
    <location>
        <begin position="297"/>
        <end position="304"/>
    </location>
</feature>
<feature type="helix" evidence="25">
    <location>
        <begin position="312"/>
        <end position="330"/>
    </location>
</feature>
<feature type="helix" evidence="25">
    <location>
        <begin position="333"/>
        <end position="346"/>
    </location>
</feature>
<feature type="strand" evidence="27">
    <location>
        <begin position="349"/>
        <end position="351"/>
    </location>
</feature>
<feature type="helix" evidence="25">
    <location>
        <begin position="364"/>
        <end position="380"/>
    </location>
</feature>
<feature type="helix" evidence="25">
    <location>
        <begin position="383"/>
        <end position="404"/>
    </location>
</feature>
<feature type="turn" evidence="25">
    <location>
        <begin position="412"/>
        <end position="414"/>
    </location>
</feature>
<feature type="helix" evidence="25">
    <location>
        <begin position="415"/>
        <end position="453"/>
    </location>
</feature>
<feature type="turn" evidence="25">
    <location>
        <begin position="454"/>
        <end position="456"/>
    </location>
</feature>
<feature type="helix" evidence="25">
    <location>
        <begin position="460"/>
        <end position="490"/>
    </location>
</feature>
<feature type="helix" evidence="25">
    <location>
        <begin position="496"/>
        <end position="523"/>
    </location>
</feature>
<feature type="helix" evidence="25">
    <location>
        <begin position="527"/>
        <end position="544"/>
    </location>
</feature>
<feature type="strand" evidence="25">
    <location>
        <begin position="546"/>
        <end position="550"/>
    </location>
</feature>
<feature type="helix" evidence="25">
    <location>
        <begin position="552"/>
        <end position="554"/>
    </location>
</feature>
<feature type="helix" evidence="25">
    <location>
        <begin position="557"/>
        <end position="563"/>
    </location>
</feature>
<feature type="helix" evidence="25">
    <location>
        <begin position="567"/>
        <end position="579"/>
    </location>
</feature>
<feature type="strand" evidence="25">
    <location>
        <begin position="580"/>
        <end position="582"/>
    </location>
</feature>
<feature type="helix" evidence="25">
    <location>
        <begin position="605"/>
        <end position="612"/>
    </location>
</feature>
<feature type="helix" evidence="24">
    <location>
        <begin position="614"/>
        <end position="616"/>
    </location>
</feature>
<feature type="helix" evidence="25">
    <location>
        <begin position="617"/>
        <end position="619"/>
    </location>
</feature>
<feature type="helix" evidence="25">
    <location>
        <begin position="620"/>
        <end position="648"/>
    </location>
</feature>
<comment type="function">
    <text evidence="6 10 11 12 13 16 19">ABCG5 and ABCG8 form an obligate heterodimer that mediates Mg(2+)- and ATP-dependent sterol transport across the cell membrane (PubMed:27144356). Plays an essential role in the selective transport of dietary plant sterols and cholesterol in and out of the enterocytes and in the selective sterol excretion by the liver into bile (PubMed:11099417, PubMed:11138003, PubMed:15054092, PubMed:27144356). Required for normal sterol homeostasis (PubMed:11099417, PubMed:11138003, PubMed:15054092). The heterodimer with ABCG8 has ATPase activity (PubMed:16893193, PubMed:20210363, PubMed:27144356).</text>
</comment>
<comment type="catalytic activity">
    <reaction evidence="1">
        <text>cholesterol(in) + ATP + H2O = cholesterol(out) + ADP + phosphate + H(+)</text>
        <dbReference type="Rhea" id="RHEA:39051"/>
        <dbReference type="ChEBI" id="CHEBI:15377"/>
        <dbReference type="ChEBI" id="CHEBI:15378"/>
        <dbReference type="ChEBI" id="CHEBI:16113"/>
        <dbReference type="ChEBI" id="CHEBI:30616"/>
        <dbReference type="ChEBI" id="CHEBI:43474"/>
        <dbReference type="ChEBI" id="CHEBI:456216"/>
    </reaction>
    <physiologicalReaction direction="left-to-right" evidence="1">
        <dbReference type="Rhea" id="RHEA:39052"/>
    </physiologicalReaction>
</comment>
<comment type="catalytic activity">
    <reaction evidence="1">
        <text>sitosterol(in) + ATP + H2O = sitosterol(out) + ADP + phosphate + H(+)</text>
        <dbReference type="Rhea" id="RHEA:39103"/>
        <dbReference type="ChEBI" id="CHEBI:15377"/>
        <dbReference type="ChEBI" id="CHEBI:15378"/>
        <dbReference type="ChEBI" id="CHEBI:27693"/>
        <dbReference type="ChEBI" id="CHEBI:30616"/>
        <dbReference type="ChEBI" id="CHEBI:43474"/>
        <dbReference type="ChEBI" id="CHEBI:456216"/>
    </reaction>
    <physiologicalReaction direction="left-to-right" evidence="1">
        <dbReference type="Rhea" id="RHEA:39104"/>
    </physiologicalReaction>
</comment>
<comment type="cofactor">
    <cofactor evidence="1">
        <name>Mg(2+)</name>
        <dbReference type="ChEBI" id="CHEBI:18420"/>
    </cofactor>
</comment>
<comment type="activity regulation">
    <text evidence="12 13">The ATPase activity of the heterodimer is stimulated by cholate. Taurocholate, glycocholate, taurochenodeoxycholate, glycochenodeoxycholate and taurodeoxycholate also stimulate ATPase activity, but to a lower degree. Glycodeoxycholate has no significant effect on ATPase activity. ATPase activity is inhibited by vanadate and by berillium fluoride.</text>
</comment>
<comment type="subunit">
    <text evidence="11 12 13">Heterodimer with ABCG8.</text>
</comment>
<comment type="interaction">
    <interactant intactId="EBI-1761423">
        <id>Q9H222</id>
    </interactant>
    <interactant intactId="EBI-3908684">
        <id>Q9H221</id>
        <label>ABCG8</label>
    </interactant>
    <organismsDiffer>false</organismsDiffer>
    <experiments>2</experiments>
</comment>
<comment type="interaction">
    <interactant intactId="EBI-1761423">
        <id>Q9H222</id>
    </interactant>
    <interactant intactId="EBI-389883">
        <id>P16333</id>
        <label>NCK1</label>
    </interactant>
    <organismsDiffer>false</organismsDiffer>
    <experiments>2</experiments>
</comment>
<comment type="interaction">
    <interactant intactId="EBI-16205983">
        <id>Q9H222-1</id>
    </interactant>
    <interactant intactId="EBI-16205990">
        <id>Q9H221-1</id>
        <label>ABCG8</label>
    </interactant>
    <organismsDiffer>false</organismsDiffer>
    <experiments>5</experiments>
</comment>
<comment type="subcellular location">
    <subcellularLocation>
        <location evidence="20 21">Cell membrane</location>
        <topology evidence="13">Multi-pass membrane protein</topology>
    </subcellularLocation>
    <subcellularLocation>
        <location evidence="9">Apical cell membrane</location>
        <topology evidence="13">Multi-pass membrane protein</topology>
    </subcellularLocation>
</comment>
<comment type="alternative products">
    <event type="alternative splicing"/>
    <isoform>
        <id>Q9H222-1</id>
        <name>1</name>
        <sequence type="displayed"/>
    </isoform>
    <isoform>
        <id>Q9H222-2</id>
        <name>2</name>
        <sequence type="described" ref="VSP_055770"/>
    </isoform>
</comment>
<comment type="tissue specificity">
    <text evidence="5 6">Strongly expressed in the liver, lower levels in the small intestine and colon.</text>
</comment>
<comment type="domain">
    <text evidence="1">The Walker motif (consensus sequence G-X-X-G-X-G-K-[ST]-T) is expected to bind ATP. Within this motif, the conserved Lys is essential for transport activity mediated by the heterodimer with ABCG8.</text>
</comment>
<comment type="PTM">
    <text evidence="11 12">N-glycosylated.</text>
</comment>
<comment type="disease" evidence="6 7 8 10 14">
    <disease id="DI-05695">
        <name>Sitosterolemia 2</name>
        <acronym>STSL2</acronym>
        <description>A form of sitosterolemia, an autosomal recessive metabolic disorder characterized by unregulated intestinal absorption of cholesterol, phytosterols and shellfish sterols, and decreased biliary excretion of dietary sterols into bile. Patients have hypercholesterolemia, very high levels of plant sterols in the plasma, and frequently develop tendon and tuberous xanthomas, accelerated atherosclerosis and premature coronary artery disease.</description>
        <dbReference type="MIM" id="618666"/>
    </disease>
    <text>The disease is caused by variants affecting the gene represented in this entry.</text>
</comment>
<comment type="similarity">
    <text evidence="18">Belongs to the ABC transporter superfamily. ABCG family. Eye pigment precursor importer (TC 3.A.1.204) subfamily.</text>
</comment>
<comment type="online information" name="ABCMdb">
    <link uri="http://abcm2.hegelab.org/search"/>
    <text>Database for mutations in ABC proteins</text>
</comment>
<evidence type="ECO:0000250" key="1">
    <source>
        <dbReference type="UniProtKB" id="Q99PE8"/>
    </source>
</evidence>
<evidence type="ECO:0000255" key="2"/>
<evidence type="ECO:0000255" key="3">
    <source>
        <dbReference type="PROSITE-ProRule" id="PRU00434"/>
    </source>
</evidence>
<evidence type="ECO:0000256" key="4">
    <source>
        <dbReference type="SAM" id="MobiDB-lite"/>
    </source>
</evidence>
<evidence type="ECO:0000269" key="5">
    <source>
    </source>
</evidence>
<evidence type="ECO:0000269" key="6">
    <source>
    </source>
</evidence>
<evidence type="ECO:0000269" key="7">
    <source>
    </source>
</evidence>
<evidence type="ECO:0000269" key="8">
    <source>
    </source>
</evidence>
<evidence type="ECO:0000269" key="9">
    <source>
    </source>
</evidence>
<evidence type="ECO:0000269" key="10">
    <source>
    </source>
</evidence>
<evidence type="ECO:0000269" key="11">
    <source>
    </source>
</evidence>
<evidence type="ECO:0000269" key="12">
    <source>
    </source>
</evidence>
<evidence type="ECO:0000269" key="13">
    <source>
    </source>
</evidence>
<evidence type="ECO:0000269" key="14">
    <source>
    </source>
</evidence>
<evidence type="ECO:0000303" key="15">
    <source>
    </source>
</evidence>
<evidence type="ECO:0000303" key="16">
    <source>
    </source>
</evidence>
<evidence type="ECO:0000303" key="17">
    <source>
    </source>
</evidence>
<evidence type="ECO:0000305" key="18"/>
<evidence type="ECO:0000305" key="19">
    <source>
    </source>
</evidence>
<evidence type="ECO:0000305" key="20">
    <source>
    </source>
</evidence>
<evidence type="ECO:0000305" key="21">
    <source>
    </source>
</evidence>
<evidence type="ECO:0000312" key="22">
    <source>
        <dbReference type="HGNC" id="HGNC:13886"/>
    </source>
</evidence>
<evidence type="ECO:0007744" key="23">
    <source>
        <dbReference type="PDB" id="5DO7"/>
    </source>
</evidence>
<evidence type="ECO:0007829" key="24">
    <source>
        <dbReference type="PDB" id="7R87"/>
    </source>
</evidence>
<evidence type="ECO:0007829" key="25">
    <source>
        <dbReference type="PDB" id="7R89"/>
    </source>
</evidence>
<evidence type="ECO:0007829" key="26">
    <source>
        <dbReference type="PDB" id="7R8A"/>
    </source>
</evidence>
<evidence type="ECO:0007829" key="27">
    <source>
        <dbReference type="PDB" id="7R8B"/>
    </source>
</evidence>